<proteinExistence type="inferred from homology"/>
<protein>
    <recommendedName>
        <fullName evidence="1">Probable malate:quinone oxidoreductase</fullName>
        <ecNumber evidence="1">1.1.5.4</ecNumber>
    </recommendedName>
    <alternativeName>
        <fullName evidence="1">MQO</fullName>
    </alternativeName>
    <alternativeName>
        <fullName evidence="1">Malate dehydrogenase [quinone]</fullName>
    </alternativeName>
</protein>
<reference key="1">
    <citation type="submission" date="2009-04" db="EMBL/GenBank/DDBJ databases">
        <title>Genome sequence of Bacillus anthracis A0248.</title>
        <authorList>
            <person name="Dodson R.J."/>
            <person name="Munk A.C."/>
            <person name="Bruce D."/>
            <person name="Detter C."/>
            <person name="Tapia R."/>
            <person name="Sutton G."/>
            <person name="Sims D."/>
            <person name="Brettin T."/>
        </authorList>
    </citation>
    <scope>NUCLEOTIDE SEQUENCE [LARGE SCALE GENOMIC DNA]</scope>
    <source>
        <strain>A0248</strain>
    </source>
</reference>
<keyword id="KW-0274">FAD</keyword>
<keyword id="KW-0285">Flavoprotein</keyword>
<keyword id="KW-0560">Oxidoreductase</keyword>
<keyword id="KW-0816">Tricarboxylic acid cycle</keyword>
<dbReference type="EC" id="1.1.5.4" evidence="1"/>
<dbReference type="EMBL" id="CP001598">
    <property type="protein sequence ID" value="ACQ47121.1"/>
    <property type="molecule type" value="Genomic_DNA"/>
</dbReference>
<dbReference type="RefSeq" id="WP_000069158.1">
    <property type="nucleotide sequence ID" value="NC_012659.1"/>
</dbReference>
<dbReference type="SMR" id="C3NZS9"/>
<dbReference type="GeneID" id="45022788"/>
<dbReference type="KEGG" id="bai:BAA_3026"/>
<dbReference type="HOGENOM" id="CLU_028151_0_0_9"/>
<dbReference type="UniPathway" id="UPA00223">
    <property type="reaction ID" value="UER01008"/>
</dbReference>
<dbReference type="GO" id="GO:0047545">
    <property type="term" value="F:2-hydroxyglutarate dehydrogenase activity"/>
    <property type="evidence" value="ECO:0007669"/>
    <property type="project" value="TreeGrafter"/>
</dbReference>
<dbReference type="GO" id="GO:0008924">
    <property type="term" value="F:L-malate dehydrogenase (quinone) activity"/>
    <property type="evidence" value="ECO:0007669"/>
    <property type="project" value="UniProtKB-UniRule"/>
</dbReference>
<dbReference type="GO" id="GO:0006099">
    <property type="term" value="P:tricarboxylic acid cycle"/>
    <property type="evidence" value="ECO:0007669"/>
    <property type="project" value="UniProtKB-UniRule"/>
</dbReference>
<dbReference type="HAMAP" id="MF_00212">
    <property type="entry name" value="MQO"/>
    <property type="match status" value="1"/>
</dbReference>
<dbReference type="InterPro" id="IPR036188">
    <property type="entry name" value="FAD/NAD-bd_sf"/>
</dbReference>
<dbReference type="InterPro" id="IPR006231">
    <property type="entry name" value="MQO"/>
</dbReference>
<dbReference type="NCBIfam" id="TIGR01320">
    <property type="entry name" value="mal_quin_oxido"/>
    <property type="match status" value="1"/>
</dbReference>
<dbReference type="NCBIfam" id="NF003603">
    <property type="entry name" value="PRK05257.1-1"/>
    <property type="match status" value="1"/>
</dbReference>
<dbReference type="NCBIfam" id="NF003604">
    <property type="entry name" value="PRK05257.1-3"/>
    <property type="match status" value="1"/>
</dbReference>
<dbReference type="NCBIfam" id="NF003605">
    <property type="entry name" value="PRK05257.1-4"/>
    <property type="match status" value="1"/>
</dbReference>
<dbReference type="NCBIfam" id="NF003606">
    <property type="entry name" value="PRK05257.2-1"/>
    <property type="match status" value="1"/>
</dbReference>
<dbReference type="NCBIfam" id="NF003608">
    <property type="entry name" value="PRK05257.2-4"/>
    <property type="match status" value="1"/>
</dbReference>
<dbReference type="NCBIfam" id="NF003610">
    <property type="entry name" value="PRK05257.3-1"/>
    <property type="match status" value="1"/>
</dbReference>
<dbReference type="NCBIfam" id="NF003611">
    <property type="entry name" value="PRK05257.3-2"/>
    <property type="match status" value="1"/>
</dbReference>
<dbReference type="NCBIfam" id="NF009875">
    <property type="entry name" value="PRK13339.1"/>
    <property type="match status" value="1"/>
</dbReference>
<dbReference type="PANTHER" id="PTHR43104">
    <property type="entry name" value="L-2-HYDROXYGLUTARATE DEHYDROGENASE, MITOCHONDRIAL"/>
    <property type="match status" value="1"/>
</dbReference>
<dbReference type="PANTHER" id="PTHR43104:SF2">
    <property type="entry name" value="L-2-HYDROXYGLUTARATE DEHYDROGENASE, MITOCHONDRIAL"/>
    <property type="match status" value="1"/>
</dbReference>
<dbReference type="Pfam" id="PF06039">
    <property type="entry name" value="Mqo"/>
    <property type="match status" value="1"/>
</dbReference>
<dbReference type="SUPFAM" id="SSF51905">
    <property type="entry name" value="FAD/NAD(P)-binding domain"/>
    <property type="match status" value="1"/>
</dbReference>
<evidence type="ECO:0000255" key="1">
    <source>
        <dbReference type="HAMAP-Rule" id="MF_00212"/>
    </source>
</evidence>
<accession>C3NZS9</accession>
<comment type="catalytic activity">
    <reaction evidence="1">
        <text>(S)-malate + a quinone = a quinol + oxaloacetate</text>
        <dbReference type="Rhea" id="RHEA:46012"/>
        <dbReference type="ChEBI" id="CHEBI:15589"/>
        <dbReference type="ChEBI" id="CHEBI:16452"/>
        <dbReference type="ChEBI" id="CHEBI:24646"/>
        <dbReference type="ChEBI" id="CHEBI:132124"/>
        <dbReference type="EC" id="1.1.5.4"/>
    </reaction>
</comment>
<comment type="cofactor">
    <cofactor evidence="1">
        <name>FAD</name>
        <dbReference type="ChEBI" id="CHEBI:57692"/>
    </cofactor>
</comment>
<comment type="pathway">
    <text evidence="1">Carbohydrate metabolism; tricarboxylic acid cycle; oxaloacetate from (S)-malate (quinone route): step 1/1.</text>
</comment>
<comment type="similarity">
    <text evidence="1">Belongs to the MQO family.</text>
</comment>
<gene>
    <name evidence="1" type="primary">mqo</name>
    <name type="ordered locus">BAA_3026</name>
</gene>
<feature type="chain" id="PRO_1000124762" description="Probable malate:quinone oxidoreductase">
    <location>
        <begin position="1"/>
        <end position="500"/>
    </location>
</feature>
<sequence length="500" mass="55181">MSNMQQKTDVILIGAGIMSATLGSLLKELAPEWEIKVFEKLASAGEESSNEWNNAGTGHSALCELNYTSEKSDGSIDISKAVKVNEQFQLSRQFWAYLVKSKLIRNPQDFIMPLPHMSLVQGEKNVEFLKNRFEALSKNPLFQGMEFSDAPETLKKWLPLIMEGRTSNEPMAATKIDSGTDVNFGALTRMLFDYLKTKDVELNYKHSVENIKRTKNGLWEVKVHDMNSGKIEHHTAKFVFIGGGGGSLPLLQKTGIPESKHIGGFPVSGLFMVCKNQKVVEQHHAKVYGKAKVGAPPMSVPHLDTRYIDNKKALLFGPFAGFSPKFLKTGSNLDLIGSVKPNNVLTMLAAGVKEMGLTKYLIQQVMLSHEKRMEELREFIPNAKSEDWDIVVAGQRVQVIKDTDAGGKGTLQFGTEVVSAADGSIAALLGASPGASTAVHVMLEVLEKCFPSRMVEWEGKIKEMIPSYGISLTENPRLFQDLHTSTGRTLGLNEKETVHN</sequence>
<name>MQO_BACAA</name>
<organism>
    <name type="scientific">Bacillus anthracis (strain A0248)</name>
    <dbReference type="NCBI Taxonomy" id="592021"/>
    <lineage>
        <taxon>Bacteria</taxon>
        <taxon>Bacillati</taxon>
        <taxon>Bacillota</taxon>
        <taxon>Bacilli</taxon>
        <taxon>Bacillales</taxon>
        <taxon>Bacillaceae</taxon>
        <taxon>Bacillus</taxon>
        <taxon>Bacillus cereus group</taxon>
    </lineage>
</organism>